<comment type="function">
    <text evidence="1">DNA-dependent RNA polymerase catalyzes the transcription of DNA into RNA using the four ribonucleoside triphosphates as substrates.</text>
</comment>
<comment type="catalytic activity">
    <reaction evidence="1">
        <text>RNA(n) + a ribonucleoside 5'-triphosphate = RNA(n+1) + diphosphate</text>
        <dbReference type="Rhea" id="RHEA:21248"/>
        <dbReference type="Rhea" id="RHEA-COMP:14527"/>
        <dbReference type="Rhea" id="RHEA-COMP:17342"/>
        <dbReference type="ChEBI" id="CHEBI:33019"/>
        <dbReference type="ChEBI" id="CHEBI:61557"/>
        <dbReference type="ChEBI" id="CHEBI:140395"/>
        <dbReference type="EC" id="2.7.7.6"/>
    </reaction>
</comment>
<comment type="subunit">
    <text evidence="1">The RNAP catalytic core consists of 2 alpha, 1 beta, 1 beta' and 1 omega subunit. When a sigma factor is associated with the core the holoenzyme is formed, which can initiate transcription.</text>
</comment>
<comment type="similarity">
    <text evidence="1">Belongs to the RNA polymerase beta chain family.</text>
</comment>
<reference key="1">
    <citation type="journal article" date="2007" name="Science">
        <title>Legumes symbioses: absence of nod genes in photosynthetic bradyrhizobia.</title>
        <authorList>
            <person name="Giraud E."/>
            <person name="Moulin L."/>
            <person name="Vallenet D."/>
            <person name="Barbe V."/>
            <person name="Cytryn E."/>
            <person name="Avarre J.-C."/>
            <person name="Jaubert M."/>
            <person name="Simon D."/>
            <person name="Cartieaux F."/>
            <person name="Prin Y."/>
            <person name="Bena G."/>
            <person name="Hannibal L."/>
            <person name="Fardoux J."/>
            <person name="Kojadinovic M."/>
            <person name="Vuillet L."/>
            <person name="Lajus A."/>
            <person name="Cruveiller S."/>
            <person name="Rouy Z."/>
            <person name="Mangenot S."/>
            <person name="Segurens B."/>
            <person name="Dossat C."/>
            <person name="Franck W.L."/>
            <person name="Chang W.-S."/>
            <person name="Saunders E."/>
            <person name="Bruce D."/>
            <person name="Richardson P."/>
            <person name="Normand P."/>
            <person name="Dreyfus B."/>
            <person name="Pignol D."/>
            <person name="Stacey G."/>
            <person name="Emerich D."/>
            <person name="Vermeglio A."/>
            <person name="Medigue C."/>
            <person name="Sadowsky M."/>
        </authorList>
    </citation>
    <scope>NUCLEOTIDE SEQUENCE [LARGE SCALE GENOMIC DNA]</scope>
    <source>
        <strain>ORS 278</strain>
    </source>
</reference>
<feature type="chain" id="PRO_0000300287" description="DNA-directed RNA polymerase subunit beta">
    <location>
        <begin position="1"/>
        <end position="1372"/>
    </location>
</feature>
<keyword id="KW-0240">DNA-directed RNA polymerase</keyword>
<keyword id="KW-0548">Nucleotidyltransferase</keyword>
<keyword id="KW-1185">Reference proteome</keyword>
<keyword id="KW-0804">Transcription</keyword>
<keyword id="KW-0808">Transferase</keyword>
<proteinExistence type="inferred from homology"/>
<protein>
    <recommendedName>
        <fullName evidence="1">DNA-directed RNA polymerase subunit beta</fullName>
        <shortName evidence="1">RNAP subunit beta</shortName>
        <ecNumber evidence="1">2.7.7.6</ecNumber>
    </recommendedName>
    <alternativeName>
        <fullName evidence="1">RNA polymerase subunit beta</fullName>
    </alternativeName>
    <alternativeName>
        <fullName evidence="1">Transcriptase subunit beta</fullName>
    </alternativeName>
</protein>
<organism>
    <name type="scientific">Bradyrhizobium sp. (strain ORS 278)</name>
    <dbReference type="NCBI Taxonomy" id="114615"/>
    <lineage>
        <taxon>Bacteria</taxon>
        <taxon>Pseudomonadati</taxon>
        <taxon>Pseudomonadota</taxon>
        <taxon>Alphaproteobacteria</taxon>
        <taxon>Hyphomicrobiales</taxon>
        <taxon>Nitrobacteraceae</taxon>
        <taxon>Bradyrhizobium</taxon>
    </lineage>
</organism>
<name>RPOB_BRASO</name>
<accession>A4YSI1</accession>
<sequence length="1372" mass="153378">MAQQTFTGRKRVRKFFGHIKEVAEMPNLIEVQKASYDQFLMVDEPTGGRPDEGLQAVFRSVFPISDFSGTSMLEFVRYEFEPPKYDVDECRQRGMTFAAPLKVTLRLIVFDIDEETGAKSVKDIKEQDVYMGDIPLMTMNGTFIVNGTERVIVSQMHRSPGVFFDHDKGKTHSSGKLLFAARVIPYRGSWLDIEFDAKDIVFARIDRRRKLPVTSLMFALGLDGEQILATFYKKLIYKRIKEGWRVPFDANRFRGYSTVNDLIDADTGKVVLEAGKKLTVRAARQLQEKGLKALRMSDEELLGNYIAEDLVNPKTGEIYAEAGEEITDKLFKVLNEQGYKDLPLLDIDHVNVGPYIRNTLSADKNMTREDALFDIYRVMRPGEPPTLDSAQAMFQSLFFDAERYDLSAVGRVKMNMRLELDAPDTQRTLRKEDILAVIKTLVDLRDGKGEIDDIDHLGNRRVRSVGELMENQYRIGLLRMERAIKERMSSVDIDTVMPQDLINAKPAAAAVREFFGSSQLSQFMDQTNPLSEITHKRRLSALGPGGLTRERAGFEVRDVHPTHYGRICPIETPEGPNIGLINSLATFARVNKYGFVETPYRKVKDGRVTDEVVYLSAMEEGRYRVAQANVPLDAKGRFTEDLVVCRHAGEVVPMTPDKVDYMDVSPKQLVSVAAALIPFLENDDANRALMGSNMQRQAVPLVRAEAPFVGTGMEGVVARDSGAAIAARRSGVIDQIDATRVVIRATEDLDPTKSGVDIYRLMKFQRSNQSTCINQRPLVKVGDIVKKGDIIADGPSTDLGELALGRNVLVAFMPWNGYNFEDSILLSERIVKEDVFTSIHIEEFEVMARDTKLGPEEITRDIPNVSEEALKNLDEAGIVYIGAEVRAGDILVGKITPKGESPMTPEEKLLRAIFGEKASDVRDTSLRVPPGVQGTIVEVRVFNRHGVDKDERALAIEREEIERLAKDRDDEQAILDRNVYSRLADMLDGRQGISGPKGFKKDTKITRAVLDEYPKSQWWLFAASNDKLMAEIEAMRKQYDESKKGLEQRFLDKVEKLQRGDELPPGVMKMVKVFVAVKRKIQPGDKMAGRHGNKGVVSKIVPIEDMPFLEDGTHADIVLNPLGVPSRMNVGQILETHLGWACAGLGKRIAQTVDAYLSKQDVKPLKETLKRIYGEDETIKTLNDNELLELGHNLSRGVPIATPVFDGAKESDIEEMLKLAGMDASGQSTVYDGRTGDPFDRKVTVGYIYMLKLHHLVDDKIHARSIGPYSLVTQQPLGGKAQFGGQRFGEMEVWALEAYGAAYTLQEMLTVKSDDVAGRTKVYEAIVRGDDTFEAGIPESFNVLVKEMRSLGLNVDLHNSKLGPAPTSEAAE</sequence>
<evidence type="ECO:0000255" key="1">
    <source>
        <dbReference type="HAMAP-Rule" id="MF_01321"/>
    </source>
</evidence>
<dbReference type="EC" id="2.7.7.6" evidence="1"/>
<dbReference type="EMBL" id="CU234118">
    <property type="protein sequence ID" value="CAL76857.1"/>
    <property type="molecule type" value="Genomic_DNA"/>
</dbReference>
<dbReference type="RefSeq" id="WP_011926045.1">
    <property type="nucleotide sequence ID" value="NC_009445.1"/>
</dbReference>
<dbReference type="SMR" id="A4YSI1"/>
<dbReference type="STRING" id="114615.BRADO3054"/>
<dbReference type="KEGG" id="bra:BRADO3054"/>
<dbReference type="eggNOG" id="COG0085">
    <property type="taxonomic scope" value="Bacteria"/>
</dbReference>
<dbReference type="HOGENOM" id="CLU_000524_4_0_5"/>
<dbReference type="OrthoDB" id="9803954at2"/>
<dbReference type="Proteomes" id="UP000001994">
    <property type="component" value="Chromosome"/>
</dbReference>
<dbReference type="GO" id="GO:0000428">
    <property type="term" value="C:DNA-directed RNA polymerase complex"/>
    <property type="evidence" value="ECO:0007669"/>
    <property type="project" value="UniProtKB-KW"/>
</dbReference>
<dbReference type="GO" id="GO:0003677">
    <property type="term" value="F:DNA binding"/>
    <property type="evidence" value="ECO:0007669"/>
    <property type="project" value="UniProtKB-UniRule"/>
</dbReference>
<dbReference type="GO" id="GO:0003899">
    <property type="term" value="F:DNA-directed RNA polymerase activity"/>
    <property type="evidence" value="ECO:0007669"/>
    <property type="project" value="UniProtKB-UniRule"/>
</dbReference>
<dbReference type="GO" id="GO:0032549">
    <property type="term" value="F:ribonucleoside binding"/>
    <property type="evidence" value="ECO:0007669"/>
    <property type="project" value="InterPro"/>
</dbReference>
<dbReference type="GO" id="GO:0006351">
    <property type="term" value="P:DNA-templated transcription"/>
    <property type="evidence" value="ECO:0007669"/>
    <property type="project" value="UniProtKB-UniRule"/>
</dbReference>
<dbReference type="CDD" id="cd00653">
    <property type="entry name" value="RNA_pol_B_RPB2"/>
    <property type="match status" value="1"/>
</dbReference>
<dbReference type="FunFam" id="2.40.50.100:FF:000006">
    <property type="entry name" value="DNA-directed RNA polymerase subunit beta"/>
    <property type="match status" value="1"/>
</dbReference>
<dbReference type="FunFam" id="3.90.1800.10:FF:000001">
    <property type="entry name" value="DNA-directed RNA polymerase subunit beta"/>
    <property type="match status" value="1"/>
</dbReference>
<dbReference type="Gene3D" id="2.40.50.100">
    <property type="match status" value="1"/>
</dbReference>
<dbReference type="Gene3D" id="2.40.50.150">
    <property type="match status" value="1"/>
</dbReference>
<dbReference type="Gene3D" id="3.90.1100.10">
    <property type="match status" value="2"/>
</dbReference>
<dbReference type="Gene3D" id="2.30.150.10">
    <property type="entry name" value="DNA-directed RNA polymerase, beta subunit, external 1 domain"/>
    <property type="match status" value="1"/>
</dbReference>
<dbReference type="Gene3D" id="2.40.270.10">
    <property type="entry name" value="DNA-directed RNA polymerase, subunit 2, domain 6"/>
    <property type="match status" value="1"/>
</dbReference>
<dbReference type="Gene3D" id="3.90.1800.10">
    <property type="entry name" value="RNA polymerase alpha subunit dimerisation domain"/>
    <property type="match status" value="1"/>
</dbReference>
<dbReference type="Gene3D" id="3.90.1110.10">
    <property type="entry name" value="RNA polymerase Rpb2, domain 2"/>
    <property type="match status" value="1"/>
</dbReference>
<dbReference type="HAMAP" id="MF_01321">
    <property type="entry name" value="RNApol_bact_RpoB"/>
    <property type="match status" value="1"/>
</dbReference>
<dbReference type="InterPro" id="IPR042107">
    <property type="entry name" value="DNA-dir_RNA_pol_bsu_ext_1_sf"/>
</dbReference>
<dbReference type="InterPro" id="IPR019462">
    <property type="entry name" value="DNA-dir_RNA_pol_bsu_external_1"/>
</dbReference>
<dbReference type="InterPro" id="IPR015712">
    <property type="entry name" value="DNA-dir_RNA_pol_su2"/>
</dbReference>
<dbReference type="InterPro" id="IPR007120">
    <property type="entry name" value="DNA-dir_RNAP_su2_dom"/>
</dbReference>
<dbReference type="InterPro" id="IPR037033">
    <property type="entry name" value="DNA-dir_RNAP_su2_hyb_sf"/>
</dbReference>
<dbReference type="InterPro" id="IPR010243">
    <property type="entry name" value="RNA_pol_bsu_bac"/>
</dbReference>
<dbReference type="InterPro" id="IPR007121">
    <property type="entry name" value="RNA_pol_bsu_CS"/>
</dbReference>
<dbReference type="InterPro" id="IPR007644">
    <property type="entry name" value="RNA_pol_bsu_protrusion"/>
</dbReference>
<dbReference type="InterPro" id="IPR007642">
    <property type="entry name" value="RNA_pol_Rpb2_2"/>
</dbReference>
<dbReference type="InterPro" id="IPR037034">
    <property type="entry name" value="RNA_pol_Rpb2_2_sf"/>
</dbReference>
<dbReference type="InterPro" id="IPR007645">
    <property type="entry name" value="RNA_pol_Rpb2_3"/>
</dbReference>
<dbReference type="InterPro" id="IPR007641">
    <property type="entry name" value="RNA_pol_Rpb2_7"/>
</dbReference>
<dbReference type="InterPro" id="IPR014724">
    <property type="entry name" value="RNA_pol_RPB2_OB-fold"/>
</dbReference>
<dbReference type="NCBIfam" id="NF001616">
    <property type="entry name" value="PRK00405.1"/>
    <property type="match status" value="1"/>
</dbReference>
<dbReference type="NCBIfam" id="TIGR02013">
    <property type="entry name" value="rpoB"/>
    <property type="match status" value="1"/>
</dbReference>
<dbReference type="PANTHER" id="PTHR20856">
    <property type="entry name" value="DNA-DIRECTED RNA POLYMERASE I SUBUNIT 2"/>
    <property type="match status" value="1"/>
</dbReference>
<dbReference type="Pfam" id="PF04563">
    <property type="entry name" value="RNA_pol_Rpb2_1"/>
    <property type="match status" value="1"/>
</dbReference>
<dbReference type="Pfam" id="PF04561">
    <property type="entry name" value="RNA_pol_Rpb2_2"/>
    <property type="match status" value="2"/>
</dbReference>
<dbReference type="Pfam" id="PF04565">
    <property type="entry name" value="RNA_pol_Rpb2_3"/>
    <property type="match status" value="1"/>
</dbReference>
<dbReference type="Pfam" id="PF10385">
    <property type="entry name" value="RNA_pol_Rpb2_45"/>
    <property type="match status" value="1"/>
</dbReference>
<dbReference type="Pfam" id="PF00562">
    <property type="entry name" value="RNA_pol_Rpb2_6"/>
    <property type="match status" value="1"/>
</dbReference>
<dbReference type="Pfam" id="PF04560">
    <property type="entry name" value="RNA_pol_Rpb2_7"/>
    <property type="match status" value="1"/>
</dbReference>
<dbReference type="SUPFAM" id="SSF64484">
    <property type="entry name" value="beta and beta-prime subunits of DNA dependent RNA-polymerase"/>
    <property type="match status" value="1"/>
</dbReference>
<dbReference type="PROSITE" id="PS01166">
    <property type="entry name" value="RNA_POL_BETA"/>
    <property type="match status" value="1"/>
</dbReference>
<gene>
    <name evidence="1" type="primary">rpoB</name>
    <name type="ordered locus">BRADO3054</name>
</gene>